<organism>
    <name type="scientific">African swine fever virus (isolate Pig/Kenya/KEN-50/1950)</name>
    <name type="common">ASFV</name>
    <dbReference type="NCBI Taxonomy" id="561445"/>
    <lineage>
        <taxon>Viruses</taxon>
        <taxon>Varidnaviria</taxon>
        <taxon>Bamfordvirae</taxon>
        <taxon>Nucleocytoviricota</taxon>
        <taxon>Pokkesviricetes</taxon>
        <taxon>Asfuvirales</taxon>
        <taxon>Asfarviridae</taxon>
        <taxon>Asfivirus</taxon>
        <taxon>African swine fever virus</taxon>
    </lineage>
</organism>
<accession>P0C8H0</accession>
<comment type="similarity">
    <text evidence="3">Belongs to the asfivirus helicase A859L family.</text>
</comment>
<gene>
    <name type="ordered locus">Ken-052</name>
</gene>
<sequence>MCAGFYVAVHPWLETQSLHKVGHTGNLAARLHDGSYTTCFTDEWRYCFTLETPTKKDAQKIEAGVLYCAQFFRVKNKELLCLLPEKIKQLAEDVANCLNISYTLCDAPTYEMNDSTIVVEPSSPSDPLISKEKLRHLVITPVEDEDRFADDVLFFSTGETRTTIEDRLYQREAANMGYQELQRSGRAILQMACRCGKTRVAYLILSNYLQGKVLYLVPGLSLLRQTLEKLYLYGISLKNVMLVGSDQTRIVLNHDTIEMTTNPVIIVKRIQEASSLLVIATYQSSTLLVDDFDLIISDECHRICGEWETRPFTHVLLNFKKGHRLFLTATPRYDTPLSMKNRELFGGVAFRYYLREGIEAGYVNDFELQMVAAPKLAHQLSNREETTKQIIVKQIIMALAYLKTNVRSPKMLVFTRDIKQAKELYAELVDLGVYALIAHSTLPRQVILKTFTEFCSSKEPVILLNCRLFQEGVEVPELNAVFFAAPRHSPRDIIQSICRPLNKQVQKPHATIFLPLEVNTENVCLDKFSSIIPFADALASEDPRFYEHLLNPSEVAYPINWIGAHGSVAELLQLARHAIRYGTQGKIDRLTRSERLPWKAAFAELKRTVEICCRYPKINDGFHFGGATLRFDTWYKWVIKSYLQYKNNEPSSLEPYQVLDLESLQDWTTRGVGGPYPWEESMAFLETWLAQNKGELVAIDIHQGGWIGLDATPMERLSGVLTTVSQRDGRSYGKNRKLRPKKGFMIPPQQAKDLDRIFGKHNLKWRKDRDNGFLKEDEHGNYTGEPTCIQEAYQTFKEYVKTNPEYIEKYWPGYAKGKHKHQELPHIWESGLAPPRYKAFKDGNKRLIQRSPKKKDVKN</sequence>
<dbReference type="EC" id="3.6.4.-"/>
<dbReference type="EMBL" id="AY261360">
    <property type="status" value="NOT_ANNOTATED_CDS"/>
    <property type="molecule type" value="Genomic_DNA"/>
</dbReference>
<dbReference type="SMR" id="P0C8H0"/>
<dbReference type="Proteomes" id="UP000000861">
    <property type="component" value="Segment"/>
</dbReference>
<dbReference type="GO" id="GO:0005524">
    <property type="term" value="F:ATP binding"/>
    <property type="evidence" value="ECO:0007669"/>
    <property type="project" value="UniProtKB-KW"/>
</dbReference>
<dbReference type="GO" id="GO:0003677">
    <property type="term" value="F:DNA binding"/>
    <property type="evidence" value="ECO:0007669"/>
    <property type="project" value="InterPro"/>
</dbReference>
<dbReference type="GO" id="GO:0004386">
    <property type="term" value="F:helicase activity"/>
    <property type="evidence" value="ECO:0007669"/>
    <property type="project" value="UniProtKB-KW"/>
</dbReference>
<dbReference type="GO" id="GO:0016787">
    <property type="term" value="F:hydrolase activity"/>
    <property type="evidence" value="ECO:0007669"/>
    <property type="project" value="UniProtKB-KW"/>
</dbReference>
<dbReference type="Gene3D" id="3.40.50.300">
    <property type="entry name" value="P-loop containing nucleotide triphosphate hydrolases"/>
    <property type="match status" value="2"/>
</dbReference>
<dbReference type="InterPro" id="IPR006935">
    <property type="entry name" value="Helicase/UvrB_N"/>
</dbReference>
<dbReference type="InterPro" id="IPR014001">
    <property type="entry name" value="Helicase_ATP-bd"/>
</dbReference>
<dbReference type="InterPro" id="IPR001650">
    <property type="entry name" value="Helicase_C-like"/>
</dbReference>
<dbReference type="InterPro" id="IPR050742">
    <property type="entry name" value="Helicase_Restrict-Modif_Enz"/>
</dbReference>
<dbReference type="InterPro" id="IPR027417">
    <property type="entry name" value="P-loop_NTPase"/>
</dbReference>
<dbReference type="InterPro" id="IPR018306">
    <property type="entry name" value="Phage_T5_Orf172_DNA-bd"/>
</dbReference>
<dbReference type="PANTHER" id="PTHR47396:SF1">
    <property type="entry name" value="ATP-DEPENDENT HELICASE IRC3-RELATED"/>
    <property type="match status" value="1"/>
</dbReference>
<dbReference type="PANTHER" id="PTHR47396">
    <property type="entry name" value="TYPE I RESTRICTION ENZYME ECOKI R PROTEIN"/>
    <property type="match status" value="1"/>
</dbReference>
<dbReference type="Pfam" id="PF00271">
    <property type="entry name" value="Helicase_C"/>
    <property type="match status" value="1"/>
</dbReference>
<dbReference type="Pfam" id="PF04851">
    <property type="entry name" value="ResIII"/>
    <property type="match status" value="1"/>
</dbReference>
<dbReference type="Pfam" id="PF10544">
    <property type="entry name" value="T5orf172"/>
    <property type="match status" value="1"/>
</dbReference>
<dbReference type="SMART" id="SM00487">
    <property type="entry name" value="DEXDc"/>
    <property type="match status" value="1"/>
</dbReference>
<dbReference type="SUPFAM" id="SSF52540">
    <property type="entry name" value="P-loop containing nucleoside triphosphate hydrolases"/>
    <property type="match status" value="1"/>
</dbReference>
<dbReference type="PROSITE" id="PS51192">
    <property type="entry name" value="HELICASE_ATP_BIND_1"/>
    <property type="match status" value="1"/>
</dbReference>
<dbReference type="PROSITE" id="PS51194">
    <property type="entry name" value="HELICASE_CTER"/>
    <property type="match status" value="1"/>
</dbReference>
<evidence type="ECO:0000255" key="1">
    <source>
        <dbReference type="PROSITE-ProRule" id="PRU00541"/>
    </source>
</evidence>
<evidence type="ECO:0000255" key="2">
    <source>
        <dbReference type="PROSITE-ProRule" id="PRU00542"/>
    </source>
</evidence>
<evidence type="ECO:0000305" key="3"/>
<feature type="chain" id="PRO_0000355212" description="Probable helicase A859L">
    <location>
        <begin position="1"/>
        <end position="859"/>
    </location>
</feature>
<feature type="domain" description="Helicase ATP-binding" evidence="1">
    <location>
        <begin position="178"/>
        <end position="349"/>
    </location>
</feature>
<feature type="domain" description="Helicase C-terminal" evidence="2">
    <location>
        <begin position="394"/>
        <end position="553"/>
    </location>
</feature>
<feature type="short sequence motif" description="DEAH box">
    <location>
        <begin position="298"/>
        <end position="301"/>
    </location>
</feature>
<feature type="binding site" evidence="1">
    <location>
        <begin position="191"/>
        <end position="198"/>
    </location>
    <ligand>
        <name>ATP</name>
        <dbReference type="ChEBI" id="CHEBI:30616"/>
    </ligand>
</feature>
<keyword id="KW-0067">ATP-binding</keyword>
<keyword id="KW-0347">Helicase</keyword>
<keyword id="KW-0378">Hydrolase</keyword>
<keyword id="KW-0547">Nucleotide-binding</keyword>
<organismHost>
    <name type="scientific">Ornithodoros</name>
    <name type="common">relapsing fever ticks</name>
    <dbReference type="NCBI Taxonomy" id="6937"/>
</organismHost>
<organismHost>
    <name type="scientific">Phacochoerus aethiopicus</name>
    <name type="common">Warthog</name>
    <dbReference type="NCBI Taxonomy" id="85517"/>
</organismHost>
<organismHost>
    <name type="scientific">Phacochoerus africanus</name>
    <name type="common">Warthog</name>
    <dbReference type="NCBI Taxonomy" id="41426"/>
</organismHost>
<organismHost>
    <name type="scientific">Potamochoerus larvatus</name>
    <name type="common">Bushpig</name>
    <dbReference type="NCBI Taxonomy" id="273792"/>
</organismHost>
<organismHost>
    <name type="scientific">Sus scrofa</name>
    <name type="common">Pig</name>
    <dbReference type="NCBI Taxonomy" id="9823"/>
</organismHost>
<name>VF859_ASFK5</name>
<protein>
    <recommendedName>
        <fullName>Probable helicase A859L</fullName>
        <ecNumber>3.6.4.-</ecNumber>
    </recommendedName>
</protein>
<proteinExistence type="inferred from homology"/>
<reference key="1">
    <citation type="submission" date="2003-03" db="EMBL/GenBank/DDBJ databases">
        <title>African swine fever virus genomes.</title>
        <authorList>
            <person name="Kutish G.F."/>
            <person name="Rock D.L."/>
        </authorList>
    </citation>
    <scope>NUCLEOTIDE SEQUENCE [LARGE SCALE GENOMIC DNA]</scope>
</reference>